<gene>
    <name type="primary">DDX50</name>
</gene>
<comment type="function">
    <text evidence="6 9 10">ATP-dependent RNA helicase that may play a role in various aspects of RNA metabolism including pre-mRNA splicing or ribosomal RNA production (PubMed:12027455). Also acts as a viral restriction factor and promotes the activation of the NF-kappa-B and IRF3 signaling pathways following its stimulation with viral RNA or infection with RNA and DNA viruses (PubMed:35215908). For instance, decreases vaccinia virus, herpes simplex virus, Zika virus or dengue virus replication during the early stage of infection (PubMed:28181036, PubMed:35215908). Mechanistically, acts via the adapter TICAM1 and independently of the DDX1-DDX21-DHX36 helicase complex to induce the production of interferon-beta (PubMed:35215908).</text>
</comment>
<comment type="catalytic activity">
    <reaction evidence="6">
        <text>ATP + H2O = ADP + phosphate + H(+)</text>
        <dbReference type="Rhea" id="RHEA:13065"/>
        <dbReference type="ChEBI" id="CHEBI:15377"/>
        <dbReference type="ChEBI" id="CHEBI:15378"/>
        <dbReference type="ChEBI" id="CHEBI:30616"/>
        <dbReference type="ChEBI" id="CHEBI:43474"/>
        <dbReference type="ChEBI" id="CHEBI:456216"/>
        <dbReference type="EC" id="3.6.4.13"/>
    </reaction>
</comment>
<comment type="subunit">
    <text evidence="8 10 11">Interacts with C1QBP. Interacts with the ubiquitin ligase CTLH complex through GID4 (PubMed:38773330). Interacts with TICAM1 (PubMed:35215908).</text>
</comment>
<comment type="subcellular location">
    <subcellularLocation>
        <location evidence="6 7 11">Nucleus</location>
        <location evidence="6 7 11">Nucleolus</location>
    </subcellularLocation>
    <subcellularLocation>
        <location evidence="9 10">Cytoplasm</location>
    </subcellularLocation>
    <text evidence="10">Accumulates in the cytoplasm to activate signaling upstream of IRF3 during viral infection.</text>
</comment>
<comment type="tissue specificity">
    <text evidence="6">Highest expression in skeletal muscle, liver, heart, placenta, and kidney.</text>
</comment>
<comment type="similarity">
    <text evidence="12">Belongs to the DEAD box helicase family. DDX21/DDX50 subfamily.</text>
</comment>
<organism>
    <name type="scientific">Homo sapiens</name>
    <name type="common">Human</name>
    <dbReference type="NCBI Taxonomy" id="9606"/>
    <lineage>
        <taxon>Eukaryota</taxon>
        <taxon>Metazoa</taxon>
        <taxon>Chordata</taxon>
        <taxon>Craniata</taxon>
        <taxon>Vertebrata</taxon>
        <taxon>Euteleostomi</taxon>
        <taxon>Mammalia</taxon>
        <taxon>Eutheria</taxon>
        <taxon>Euarchontoglires</taxon>
        <taxon>Primates</taxon>
        <taxon>Haplorrhini</taxon>
        <taxon>Catarrhini</taxon>
        <taxon>Hominidae</taxon>
        <taxon>Homo</taxon>
    </lineage>
</organism>
<feature type="chain" id="PRO_0000055054" description="ATP-dependent RNA helicase DDX50">
    <location>
        <begin position="1"/>
        <end position="737"/>
    </location>
</feature>
<feature type="domain" description="Helicase ATP-binding" evidence="3">
    <location>
        <begin position="168"/>
        <end position="347"/>
    </location>
</feature>
<feature type="domain" description="Helicase C-terminal" evidence="4">
    <location>
        <begin position="380"/>
        <end position="524"/>
    </location>
</feature>
<feature type="region of interest" description="Disordered" evidence="5">
    <location>
        <begin position="1"/>
        <end position="131"/>
    </location>
</feature>
<feature type="region of interest" description="Disordered" evidence="5">
    <location>
        <begin position="668"/>
        <end position="737"/>
    </location>
</feature>
<feature type="short sequence motif" description="Q motif">
    <location>
        <begin position="137"/>
        <end position="165"/>
    </location>
</feature>
<feature type="short sequence motif" description="DEVD box">
    <location>
        <begin position="290"/>
        <end position="293"/>
    </location>
</feature>
<feature type="compositionally biased region" description="Acidic residues" evidence="5">
    <location>
        <begin position="11"/>
        <end position="20"/>
    </location>
</feature>
<feature type="compositionally biased region" description="Basic and acidic residues" evidence="5">
    <location>
        <begin position="38"/>
        <end position="51"/>
    </location>
</feature>
<feature type="compositionally biased region" description="Basic and acidic residues" evidence="5">
    <location>
        <begin position="67"/>
        <end position="87"/>
    </location>
</feature>
<feature type="compositionally biased region" description="Basic and acidic residues" evidence="5">
    <location>
        <begin position="117"/>
        <end position="131"/>
    </location>
</feature>
<feature type="compositionally biased region" description="Low complexity" evidence="5">
    <location>
        <begin position="673"/>
        <end position="687"/>
    </location>
</feature>
<feature type="compositionally biased region" description="Gly residues" evidence="5">
    <location>
        <begin position="691"/>
        <end position="701"/>
    </location>
</feature>
<feature type="compositionally biased region" description="Low complexity" evidence="5">
    <location>
        <begin position="702"/>
        <end position="712"/>
    </location>
</feature>
<feature type="compositionally biased region" description="Basic residues" evidence="5">
    <location>
        <begin position="720"/>
        <end position="737"/>
    </location>
</feature>
<feature type="binding site" evidence="3">
    <location>
        <begin position="181"/>
        <end position="188"/>
    </location>
    <ligand>
        <name>ATP</name>
        <dbReference type="ChEBI" id="CHEBI:30616"/>
    </ligand>
</feature>
<feature type="modified residue" description="Phosphoserine" evidence="15 16">
    <location>
        <position position="41"/>
    </location>
</feature>
<feature type="modified residue" description="Phosphoserine" evidence="13 14 16">
    <location>
        <position position="82"/>
    </location>
</feature>
<feature type="modified residue" description="Phosphoserine" evidence="14">
    <location>
        <position position="86"/>
    </location>
</feature>
<feature type="modified residue" description="Phosphoserine" evidence="1">
    <location>
        <position position="121"/>
    </location>
</feature>
<feature type="modified residue" description="Phosphoserine" evidence="1">
    <location>
        <position position="122"/>
    </location>
</feature>
<feature type="modified residue" description="Phosphothreonine" evidence="2">
    <location>
        <position position="247"/>
    </location>
</feature>
<feature type="modified residue" description="Phosphoserine" evidence="2">
    <location>
        <position position="518"/>
    </location>
</feature>
<feature type="cross-link" description="Glycyl lysine isopeptide (Lys-Gly) (interchain with G-Cter in SUMO2)" evidence="17">
    <location>
        <position position="125"/>
    </location>
</feature>
<feature type="sequence conflict" description="In Ref. 4; AAH18637." evidence="12" ref="4">
    <original>S</original>
    <variation>I</variation>
    <location>
        <position position="680"/>
    </location>
</feature>
<feature type="strand" evidence="18">
    <location>
        <begin position="587"/>
        <end position="593"/>
    </location>
</feature>
<feature type="helix" evidence="18">
    <location>
        <begin position="602"/>
        <end position="611"/>
    </location>
</feature>
<feature type="helix" evidence="18">
    <location>
        <begin position="614"/>
        <end position="617"/>
    </location>
</feature>
<feature type="strand" evidence="18">
    <location>
        <begin position="621"/>
        <end position="625"/>
    </location>
</feature>
<feature type="strand" evidence="18">
    <location>
        <begin position="629"/>
        <end position="637"/>
    </location>
</feature>
<feature type="helix" evidence="18">
    <location>
        <begin position="638"/>
        <end position="647"/>
    </location>
</feature>
<feature type="strand" evidence="18">
    <location>
        <begin position="650"/>
        <end position="652"/>
    </location>
</feature>
<feature type="strand" evidence="18">
    <location>
        <begin position="654"/>
        <end position="656"/>
    </location>
</feature>
<dbReference type="EC" id="3.6.4.13"/>
<dbReference type="EMBL" id="AF334103">
    <property type="protein sequence ID" value="AAK29402.1"/>
    <property type="molecule type" value="mRNA"/>
</dbReference>
<dbReference type="EMBL" id="AL359844">
    <property type="status" value="NOT_ANNOTATED_CDS"/>
    <property type="molecule type" value="Genomic_DNA"/>
</dbReference>
<dbReference type="EMBL" id="CH471083">
    <property type="protein sequence ID" value="EAW54304.1"/>
    <property type="molecule type" value="Genomic_DNA"/>
</dbReference>
<dbReference type="EMBL" id="BC000210">
    <property type="protein sequence ID" value="AAH00210.1"/>
    <property type="molecule type" value="mRNA"/>
</dbReference>
<dbReference type="EMBL" id="BC000272">
    <property type="protein sequence ID" value="AAH00272.1"/>
    <property type="molecule type" value="mRNA"/>
</dbReference>
<dbReference type="EMBL" id="BC018637">
    <property type="protein sequence ID" value="AAH18637.2"/>
    <property type="molecule type" value="mRNA"/>
</dbReference>
<dbReference type="CCDS" id="CCDS7283.1"/>
<dbReference type="RefSeq" id="NP_076950.1">
    <property type="nucleotide sequence ID" value="NM_024045.2"/>
</dbReference>
<dbReference type="RefSeq" id="XP_016872115.1">
    <property type="nucleotide sequence ID" value="XM_017016626.1"/>
</dbReference>
<dbReference type="RefSeq" id="XP_054222682.1">
    <property type="nucleotide sequence ID" value="XM_054366707.1"/>
</dbReference>
<dbReference type="PDB" id="2E29">
    <property type="method" value="NMR"/>
    <property type="chains" value="A=575-659"/>
</dbReference>
<dbReference type="PDBsum" id="2E29"/>
<dbReference type="BMRB" id="Q9BQ39"/>
<dbReference type="SMR" id="Q9BQ39"/>
<dbReference type="BioGRID" id="122480">
    <property type="interactions" value="294"/>
</dbReference>
<dbReference type="FunCoup" id="Q9BQ39">
    <property type="interactions" value="2373"/>
</dbReference>
<dbReference type="IntAct" id="Q9BQ39">
    <property type="interactions" value="151"/>
</dbReference>
<dbReference type="MINT" id="Q9BQ39"/>
<dbReference type="STRING" id="9606.ENSP00000362687"/>
<dbReference type="GlyGen" id="Q9BQ39">
    <property type="glycosylation" value="1 site, 1 O-linked glycan (1 site)"/>
</dbReference>
<dbReference type="iPTMnet" id="Q9BQ39"/>
<dbReference type="MetOSite" id="Q9BQ39"/>
<dbReference type="PhosphoSitePlus" id="Q9BQ39"/>
<dbReference type="SwissPalm" id="Q9BQ39"/>
<dbReference type="BioMuta" id="DDX50"/>
<dbReference type="DMDM" id="55976580"/>
<dbReference type="jPOST" id="Q9BQ39"/>
<dbReference type="MassIVE" id="Q9BQ39"/>
<dbReference type="PaxDb" id="9606-ENSP00000362687"/>
<dbReference type="PeptideAtlas" id="Q9BQ39"/>
<dbReference type="ProteomicsDB" id="78619"/>
<dbReference type="Pumba" id="Q9BQ39"/>
<dbReference type="Antibodypedia" id="14671">
    <property type="antibodies" value="172 antibodies from 30 providers"/>
</dbReference>
<dbReference type="DNASU" id="79009"/>
<dbReference type="Ensembl" id="ENST00000373585.8">
    <property type="protein sequence ID" value="ENSP00000362687.3"/>
    <property type="gene ID" value="ENSG00000107625.14"/>
</dbReference>
<dbReference type="GeneID" id="79009"/>
<dbReference type="KEGG" id="hsa:79009"/>
<dbReference type="MANE-Select" id="ENST00000373585.8">
    <property type="protein sequence ID" value="ENSP00000362687.3"/>
    <property type="RefSeq nucleotide sequence ID" value="NM_024045.2"/>
    <property type="RefSeq protein sequence ID" value="NP_076950.1"/>
</dbReference>
<dbReference type="UCSC" id="uc001jou.3">
    <property type="organism name" value="human"/>
</dbReference>
<dbReference type="AGR" id="HGNC:17906"/>
<dbReference type="CTD" id="79009"/>
<dbReference type="DisGeNET" id="79009"/>
<dbReference type="GeneCards" id="DDX50"/>
<dbReference type="HGNC" id="HGNC:17906">
    <property type="gene designation" value="DDX50"/>
</dbReference>
<dbReference type="HPA" id="ENSG00000107625">
    <property type="expression patterns" value="Low tissue specificity"/>
</dbReference>
<dbReference type="MIM" id="610373">
    <property type="type" value="gene"/>
</dbReference>
<dbReference type="neXtProt" id="NX_Q9BQ39"/>
<dbReference type="OpenTargets" id="ENSG00000107625"/>
<dbReference type="PharmGKB" id="PA134948525"/>
<dbReference type="VEuPathDB" id="HostDB:ENSG00000107625"/>
<dbReference type="eggNOG" id="KOG0331">
    <property type="taxonomic scope" value="Eukaryota"/>
</dbReference>
<dbReference type="GeneTree" id="ENSGT00940000155901"/>
<dbReference type="HOGENOM" id="CLU_003041_20_0_1"/>
<dbReference type="InParanoid" id="Q9BQ39"/>
<dbReference type="OMA" id="EHTMQRF"/>
<dbReference type="OrthoDB" id="4255at2759"/>
<dbReference type="PAN-GO" id="Q9BQ39">
    <property type="GO annotations" value="3 GO annotations based on evolutionary models"/>
</dbReference>
<dbReference type="PhylomeDB" id="Q9BQ39"/>
<dbReference type="TreeFam" id="TF328622"/>
<dbReference type="PathwayCommons" id="Q9BQ39"/>
<dbReference type="SignaLink" id="Q9BQ39"/>
<dbReference type="BioGRID-ORCS" id="79009">
    <property type="hits" value="28 hits in 1149 CRISPR screens"/>
</dbReference>
<dbReference type="CD-CODE" id="232F8A39">
    <property type="entry name" value="P-body"/>
</dbReference>
<dbReference type="CD-CODE" id="91857CE7">
    <property type="entry name" value="Nucleolus"/>
</dbReference>
<dbReference type="CD-CODE" id="DEE660B4">
    <property type="entry name" value="Stress granule"/>
</dbReference>
<dbReference type="ChiTaRS" id="DDX50">
    <property type="organism name" value="human"/>
</dbReference>
<dbReference type="EvolutionaryTrace" id="Q9BQ39"/>
<dbReference type="GeneWiki" id="DDX50"/>
<dbReference type="GenomeRNAi" id="79009"/>
<dbReference type="Pharos" id="Q9BQ39">
    <property type="development level" value="Tbio"/>
</dbReference>
<dbReference type="PRO" id="PR:Q9BQ39"/>
<dbReference type="Proteomes" id="UP000005640">
    <property type="component" value="Chromosome 10"/>
</dbReference>
<dbReference type="RNAct" id="Q9BQ39">
    <property type="molecule type" value="protein"/>
</dbReference>
<dbReference type="Bgee" id="ENSG00000107625">
    <property type="expression patterns" value="Expressed in cartilage tissue and 205 other cell types or tissues"/>
</dbReference>
<dbReference type="ExpressionAtlas" id="Q9BQ39">
    <property type="expression patterns" value="baseline and differential"/>
</dbReference>
<dbReference type="GO" id="GO:0005737">
    <property type="term" value="C:cytoplasm"/>
    <property type="evidence" value="ECO:0007669"/>
    <property type="project" value="UniProtKB-SubCell"/>
</dbReference>
<dbReference type="GO" id="GO:0016020">
    <property type="term" value="C:membrane"/>
    <property type="evidence" value="ECO:0007005"/>
    <property type="project" value="UniProtKB"/>
</dbReference>
<dbReference type="GO" id="GO:0005730">
    <property type="term" value="C:nucleolus"/>
    <property type="evidence" value="ECO:0000314"/>
    <property type="project" value="HPA"/>
</dbReference>
<dbReference type="GO" id="GO:0005886">
    <property type="term" value="C:plasma membrane"/>
    <property type="evidence" value="ECO:0000314"/>
    <property type="project" value="HPA"/>
</dbReference>
<dbReference type="GO" id="GO:0005524">
    <property type="term" value="F:ATP binding"/>
    <property type="evidence" value="ECO:0007669"/>
    <property type="project" value="UniProtKB-KW"/>
</dbReference>
<dbReference type="GO" id="GO:0016887">
    <property type="term" value="F:ATP hydrolysis activity"/>
    <property type="evidence" value="ECO:0007669"/>
    <property type="project" value="RHEA"/>
</dbReference>
<dbReference type="GO" id="GO:0003729">
    <property type="term" value="F:mRNA binding"/>
    <property type="evidence" value="ECO:0000318"/>
    <property type="project" value="GO_Central"/>
</dbReference>
<dbReference type="GO" id="GO:0003723">
    <property type="term" value="F:RNA binding"/>
    <property type="evidence" value="ECO:0007005"/>
    <property type="project" value="UniProtKB"/>
</dbReference>
<dbReference type="GO" id="GO:0003724">
    <property type="term" value="F:RNA helicase activity"/>
    <property type="evidence" value="ECO:0000318"/>
    <property type="project" value="GO_Central"/>
</dbReference>
<dbReference type="CDD" id="cd17944">
    <property type="entry name" value="DEADc_DDX21_DDX50"/>
    <property type="match status" value="1"/>
</dbReference>
<dbReference type="CDD" id="cd12936">
    <property type="entry name" value="GUCT_RHII_Gualpha_beta"/>
    <property type="match status" value="1"/>
</dbReference>
<dbReference type="CDD" id="cd18787">
    <property type="entry name" value="SF2_C_DEAD"/>
    <property type="match status" value="1"/>
</dbReference>
<dbReference type="FunFam" id="3.30.70.2280:FF:000001">
    <property type="entry name" value="ATP-dependent RNA helicase DDX50"/>
    <property type="match status" value="1"/>
</dbReference>
<dbReference type="FunFam" id="3.40.50.300:FF:000666">
    <property type="entry name" value="ATP-dependent RNA helicase DDX50"/>
    <property type="match status" value="1"/>
</dbReference>
<dbReference type="FunFam" id="3.40.50.300:FF:001045">
    <property type="entry name" value="ATP-dependent RNA helicase DDX50 isoform X1"/>
    <property type="match status" value="1"/>
</dbReference>
<dbReference type="Gene3D" id="3.30.70.2280">
    <property type="match status" value="1"/>
</dbReference>
<dbReference type="Gene3D" id="3.40.50.300">
    <property type="entry name" value="P-loop containing nucleotide triphosphate hydrolases"/>
    <property type="match status" value="2"/>
</dbReference>
<dbReference type="InterPro" id="IPR011545">
    <property type="entry name" value="DEAD/DEAH_box_helicase_dom"/>
</dbReference>
<dbReference type="InterPro" id="IPR050079">
    <property type="entry name" value="DEAD_box_RNA_helicase"/>
</dbReference>
<dbReference type="InterPro" id="IPR012562">
    <property type="entry name" value="GUCT"/>
</dbReference>
<dbReference type="InterPro" id="IPR014001">
    <property type="entry name" value="Helicase_ATP-bd"/>
</dbReference>
<dbReference type="InterPro" id="IPR001650">
    <property type="entry name" value="Helicase_C-like"/>
</dbReference>
<dbReference type="InterPro" id="IPR027417">
    <property type="entry name" value="P-loop_NTPase"/>
</dbReference>
<dbReference type="InterPro" id="IPR035979">
    <property type="entry name" value="RBD_domain_sf"/>
</dbReference>
<dbReference type="PANTHER" id="PTHR47959">
    <property type="entry name" value="ATP-DEPENDENT RNA HELICASE RHLE-RELATED"/>
    <property type="match status" value="1"/>
</dbReference>
<dbReference type="PANTHER" id="PTHR47959:SF19">
    <property type="entry name" value="NUCLEOLAR RNA HELICASE 2-A"/>
    <property type="match status" value="1"/>
</dbReference>
<dbReference type="Pfam" id="PF00270">
    <property type="entry name" value="DEAD"/>
    <property type="match status" value="1"/>
</dbReference>
<dbReference type="Pfam" id="PF08152">
    <property type="entry name" value="GUCT"/>
    <property type="match status" value="1"/>
</dbReference>
<dbReference type="Pfam" id="PF00271">
    <property type="entry name" value="Helicase_C"/>
    <property type="match status" value="1"/>
</dbReference>
<dbReference type="SMART" id="SM00487">
    <property type="entry name" value="DEXDc"/>
    <property type="match status" value="1"/>
</dbReference>
<dbReference type="SMART" id="SM00490">
    <property type="entry name" value="HELICc"/>
    <property type="match status" value="1"/>
</dbReference>
<dbReference type="SUPFAM" id="SSF52540">
    <property type="entry name" value="P-loop containing nucleoside triphosphate hydrolases"/>
    <property type="match status" value="1"/>
</dbReference>
<dbReference type="SUPFAM" id="SSF54928">
    <property type="entry name" value="RNA-binding domain, RBD"/>
    <property type="match status" value="1"/>
</dbReference>
<dbReference type="PROSITE" id="PS51192">
    <property type="entry name" value="HELICASE_ATP_BIND_1"/>
    <property type="match status" value="1"/>
</dbReference>
<dbReference type="PROSITE" id="PS51194">
    <property type="entry name" value="HELICASE_CTER"/>
    <property type="match status" value="1"/>
</dbReference>
<dbReference type="PROSITE" id="PS51195">
    <property type="entry name" value="Q_MOTIF"/>
    <property type="match status" value="1"/>
</dbReference>
<protein>
    <recommendedName>
        <fullName>ATP-dependent RNA helicase DDX50</fullName>
        <ecNumber>3.6.4.13</ecNumber>
    </recommendedName>
    <alternativeName>
        <fullName>DEAD box protein 50</fullName>
    </alternativeName>
    <alternativeName>
        <fullName>Gu-beta</fullName>
    </alternativeName>
    <alternativeName>
        <fullName>Nucleolar protein Gu2</fullName>
    </alternativeName>
</protein>
<name>DDX50_HUMAN</name>
<proteinExistence type="evidence at protein level"/>
<sequence>MPGKLLWGDIMELEAPLEESESQKKERQKSDRRKSRHHYDSDEKSETRENGVTDDLDAPKAKKSKMKEKLNGDTEEGFNRLSDEFSKSHKSRRKDLPNGDIDEYEKKSKRVSSLDTSTHKSSDNKLEETLTREQKEGAFSNFPISEETIKLLKGRGVTYLFPIQVKTFGPVYEGKDLIAQARTGTGKTFSFAIPLIERLQRNQETIKKSRSPKVLVLAPTRELANQVAKDFKDITRKLSVACFYGGTSYQSQINHIRNGIDILVGTPGRIKDHLQSGRLDLSKLRHVVLDEVDQMLDLGFAEQVEDIIHESYKTDSEDNPQTLLFSATCPQWVYKVAKKYMKSRYEQVDLVGKMTQKAATTVEHLAIQCHWSQRPAVIGDVLQVYSGSEGRAIIFCETKKNVTEMAMNPHIKQNAQCLHGDIAQSQREITLKGFREGSFKVLVATNVAARGLDIPEVDLVIQSSPPQDVESYIHRSGRTGRAGRTGICICFYQPRERGQLRYVEQKAGITFKRVGVPSTMDLVKSKSMDAIRSLASVSYAAVDFFRPSAQRLIEEKGAVDALAAALAHISGASSFEPRSLITSDKGFVTMTLESLEEIQDVSCAWKELNRKLSSNAVSQITRMCLLKGNMGVCFDVPTTESERLQAEWHDSDWILSVPAKLPEIEEYYDGNTSSNSRQRSGWSSGRSGRSGRSGGRSGGRSGRQSRQGSRSGSRQDGRRRSGNRNRSRSGGHKRSFD</sequence>
<reference key="1">
    <citation type="journal article" date="2002" name="Gene">
        <title>Genomic structure of newly identified paralogue of RNA helicase II/Gu: detection of pseudogenes and multiple alternatively spliced mRNAs.</title>
        <authorList>
            <person name="Valdez B.C."/>
            <person name="Yang H."/>
            <person name="Hong E."/>
            <person name="Sequitin A.M."/>
        </authorList>
    </citation>
    <scope>NUCLEOTIDE SEQUENCE [MRNA]</scope>
</reference>
<reference key="2">
    <citation type="journal article" date="2004" name="Nature">
        <title>The DNA sequence and comparative analysis of human chromosome 10.</title>
        <authorList>
            <person name="Deloukas P."/>
            <person name="Earthrowl M.E."/>
            <person name="Grafham D.V."/>
            <person name="Rubenfield M."/>
            <person name="French L."/>
            <person name="Steward C.A."/>
            <person name="Sims S.K."/>
            <person name="Jones M.C."/>
            <person name="Searle S."/>
            <person name="Scott C."/>
            <person name="Howe K."/>
            <person name="Hunt S.E."/>
            <person name="Andrews T.D."/>
            <person name="Gilbert J.G.R."/>
            <person name="Swarbreck D."/>
            <person name="Ashurst J.L."/>
            <person name="Taylor A."/>
            <person name="Battles J."/>
            <person name="Bird C.P."/>
            <person name="Ainscough R."/>
            <person name="Almeida J.P."/>
            <person name="Ashwell R.I.S."/>
            <person name="Ambrose K.D."/>
            <person name="Babbage A.K."/>
            <person name="Bagguley C.L."/>
            <person name="Bailey J."/>
            <person name="Banerjee R."/>
            <person name="Bates K."/>
            <person name="Beasley H."/>
            <person name="Bray-Allen S."/>
            <person name="Brown A.J."/>
            <person name="Brown J.Y."/>
            <person name="Burford D.C."/>
            <person name="Burrill W."/>
            <person name="Burton J."/>
            <person name="Cahill P."/>
            <person name="Camire D."/>
            <person name="Carter N.P."/>
            <person name="Chapman J.C."/>
            <person name="Clark S.Y."/>
            <person name="Clarke G."/>
            <person name="Clee C.M."/>
            <person name="Clegg S."/>
            <person name="Corby N."/>
            <person name="Coulson A."/>
            <person name="Dhami P."/>
            <person name="Dutta I."/>
            <person name="Dunn M."/>
            <person name="Faulkner L."/>
            <person name="Frankish A."/>
            <person name="Frankland J.A."/>
            <person name="Garner P."/>
            <person name="Garnett J."/>
            <person name="Gribble S."/>
            <person name="Griffiths C."/>
            <person name="Grocock R."/>
            <person name="Gustafson E."/>
            <person name="Hammond S."/>
            <person name="Harley J.L."/>
            <person name="Hart E."/>
            <person name="Heath P.D."/>
            <person name="Ho T.P."/>
            <person name="Hopkins B."/>
            <person name="Horne J."/>
            <person name="Howden P.J."/>
            <person name="Huckle E."/>
            <person name="Hynds C."/>
            <person name="Johnson C."/>
            <person name="Johnson D."/>
            <person name="Kana A."/>
            <person name="Kay M."/>
            <person name="Kimberley A.M."/>
            <person name="Kershaw J.K."/>
            <person name="Kokkinaki M."/>
            <person name="Laird G.K."/>
            <person name="Lawlor S."/>
            <person name="Lee H.M."/>
            <person name="Leongamornlert D.A."/>
            <person name="Laird G."/>
            <person name="Lloyd C."/>
            <person name="Lloyd D.M."/>
            <person name="Loveland J."/>
            <person name="Lovell J."/>
            <person name="McLaren S."/>
            <person name="McLay K.E."/>
            <person name="McMurray A."/>
            <person name="Mashreghi-Mohammadi M."/>
            <person name="Matthews L."/>
            <person name="Milne S."/>
            <person name="Nickerson T."/>
            <person name="Nguyen M."/>
            <person name="Overton-Larty E."/>
            <person name="Palmer S.A."/>
            <person name="Pearce A.V."/>
            <person name="Peck A.I."/>
            <person name="Pelan S."/>
            <person name="Phillimore B."/>
            <person name="Porter K."/>
            <person name="Rice C.M."/>
            <person name="Rogosin A."/>
            <person name="Ross M.T."/>
            <person name="Sarafidou T."/>
            <person name="Sehra H.K."/>
            <person name="Shownkeen R."/>
            <person name="Skuce C.D."/>
            <person name="Smith M."/>
            <person name="Standring L."/>
            <person name="Sycamore N."/>
            <person name="Tester J."/>
            <person name="Thorpe A."/>
            <person name="Torcasso W."/>
            <person name="Tracey A."/>
            <person name="Tromans A."/>
            <person name="Tsolas J."/>
            <person name="Wall M."/>
            <person name="Walsh J."/>
            <person name="Wang H."/>
            <person name="Weinstock K."/>
            <person name="West A.P."/>
            <person name="Willey D.L."/>
            <person name="Whitehead S.L."/>
            <person name="Wilming L."/>
            <person name="Wray P.W."/>
            <person name="Young L."/>
            <person name="Chen Y."/>
            <person name="Lovering R.C."/>
            <person name="Moschonas N.K."/>
            <person name="Siebert R."/>
            <person name="Fechtel K."/>
            <person name="Bentley D."/>
            <person name="Durbin R.M."/>
            <person name="Hubbard T."/>
            <person name="Doucette-Stamm L."/>
            <person name="Beck S."/>
            <person name="Smith D.R."/>
            <person name="Rogers J."/>
        </authorList>
    </citation>
    <scope>NUCLEOTIDE SEQUENCE [LARGE SCALE GENOMIC DNA]</scope>
</reference>
<reference key="3">
    <citation type="submission" date="2005-07" db="EMBL/GenBank/DDBJ databases">
        <authorList>
            <person name="Mural R.J."/>
            <person name="Istrail S."/>
            <person name="Sutton G.G."/>
            <person name="Florea L."/>
            <person name="Halpern A.L."/>
            <person name="Mobarry C.M."/>
            <person name="Lippert R."/>
            <person name="Walenz B."/>
            <person name="Shatkay H."/>
            <person name="Dew I."/>
            <person name="Miller J.R."/>
            <person name="Flanigan M.J."/>
            <person name="Edwards N.J."/>
            <person name="Bolanos R."/>
            <person name="Fasulo D."/>
            <person name="Halldorsson B.V."/>
            <person name="Hannenhalli S."/>
            <person name="Turner R."/>
            <person name="Yooseph S."/>
            <person name="Lu F."/>
            <person name="Nusskern D.R."/>
            <person name="Shue B.C."/>
            <person name="Zheng X.H."/>
            <person name="Zhong F."/>
            <person name="Delcher A.L."/>
            <person name="Huson D.H."/>
            <person name="Kravitz S.A."/>
            <person name="Mouchard L."/>
            <person name="Reinert K."/>
            <person name="Remington K.A."/>
            <person name="Clark A.G."/>
            <person name="Waterman M.S."/>
            <person name="Eichler E.E."/>
            <person name="Adams M.D."/>
            <person name="Hunkapiller M.W."/>
            <person name="Myers E.W."/>
            <person name="Venter J.C."/>
        </authorList>
    </citation>
    <scope>NUCLEOTIDE SEQUENCE [LARGE SCALE GENOMIC DNA]</scope>
</reference>
<reference key="4">
    <citation type="journal article" date="2004" name="Genome Res.">
        <title>The status, quality, and expansion of the NIH full-length cDNA project: the Mammalian Gene Collection (MGC).</title>
        <authorList>
            <consortium name="The MGC Project Team"/>
        </authorList>
    </citation>
    <scope>NUCLEOTIDE SEQUENCE [LARGE SCALE MRNA]</scope>
    <source>
        <tissue>Eye</tissue>
        <tissue>Skin</tissue>
    </source>
</reference>
<reference key="5">
    <citation type="journal article" date="2002" name="Mol. Biol. Cell">
        <title>Functional proteomic analysis of human nucleolus.</title>
        <authorList>
            <person name="Scherl A."/>
            <person name="Coute Y."/>
            <person name="Deon C."/>
            <person name="Calle A."/>
            <person name="Kindbeiter K."/>
            <person name="Sanchez J.-C."/>
            <person name="Greco A."/>
            <person name="Hochstrasser D.F."/>
            <person name="Diaz J.-J."/>
        </authorList>
    </citation>
    <scope>SUBCELLULAR LOCATION [LARGE SCALE ANALYSIS]</scope>
    <source>
        <tissue>Cervix carcinoma</tissue>
    </source>
</reference>
<reference key="6">
    <citation type="journal article" date="2002" name="Exp. Cell Res.">
        <title>Expression, cellular localization, and enzymatic activities of RNA helicase II/Gu(beta).</title>
        <authorList>
            <person name="Valdez B.C."/>
            <person name="Perlaky L."/>
            <person name="Henning D."/>
        </authorList>
    </citation>
    <scope>FUNCTION</scope>
    <scope>SUBCELLULAR LOCATION</scope>
    <scope>TISSUE SPECIFICITY</scope>
    <scope>CATALYTIC ACTIVITY</scope>
</reference>
<reference key="7">
    <citation type="journal article" date="2008" name="Proc. Natl. Acad. Sci. U.S.A.">
        <title>A quantitative atlas of mitotic phosphorylation.</title>
        <authorList>
            <person name="Dephoure N."/>
            <person name="Zhou C."/>
            <person name="Villen J."/>
            <person name="Beausoleil S.A."/>
            <person name="Bakalarski C.E."/>
            <person name="Elledge S.J."/>
            <person name="Gygi S.P."/>
        </authorList>
    </citation>
    <scope>PHOSPHORYLATION [LARGE SCALE ANALYSIS] AT SER-82</scope>
    <scope>IDENTIFICATION BY MASS SPECTROMETRY [LARGE SCALE ANALYSIS]</scope>
    <source>
        <tissue>Cervix carcinoma</tissue>
    </source>
</reference>
<reference key="8">
    <citation type="journal article" date="2010" name="Sci. Signal.">
        <title>Quantitative phosphoproteomics reveals widespread full phosphorylation site occupancy during mitosis.</title>
        <authorList>
            <person name="Olsen J.V."/>
            <person name="Vermeulen M."/>
            <person name="Santamaria A."/>
            <person name="Kumar C."/>
            <person name="Miller M.L."/>
            <person name="Jensen L.J."/>
            <person name="Gnad F."/>
            <person name="Cox J."/>
            <person name="Jensen T.S."/>
            <person name="Nigg E.A."/>
            <person name="Brunak S."/>
            <person name="Mann M."/>
        </authorList>
    </citation>
    <scope>PHOSPHORYLATION [LARGE SCALE ANALYSIS] AT SER-82 AND SER-86</scope>
    <scope>IDENTIFICATION BY MASS SPECTROMETRY [LARGE SCALE ANALYSIS]</scope>
    <source>
        <tissue>Cervix carcinoma</tissue>
    </source>
</reference>
<reference key="9">
    <citation type="journal article" date="2011" name="BMC Syst. Biol.">
        <title>Initial characterization of the human central proteome.</title>
        <authorList>
            <person name="Burkard T.R."/>
            <person name="Planyavsky M."/>
            <person name="Kaupe I."/>
            <person name="Breitwieser F.P."/>
            <person name="Buerckstuemmer T."/>
            <person name="Bennett K.L."/>
            <person name="Superti-Furga G."/>
            <person name="Colinge J."/>
        </authorList>
    </citation>
    <scope>IDENTIFICATION BY MASS SPECTROMETRY [LARGE SCALE ANALYSIS]</scope>
</reference>
<reference key="10">
    <citation type="journal article" date="2011" name="Mol. Cell. Proteomics">
        <title>Splicing factor 2-associated protein p32 participates in ribosome biogenesis by regulating the binding of Nop52 and fibrillarin to preribosome particles.</title>
        <authorList>
            <person name="Yoshikawa H."/>
            <person name="Komatsu W."/>
            <person name="Hayano T."/>
            <person name="Miura Y."/>
            <person name="Homma K."/>
            <person name="Izumikawa K."/>
            <person name="Ishikawa H."/>
            <person name="Miyazawa N."/>
            <person name="Tachikawa H."/>
            <person name="Yamauchi Y."/>
            <person name="Isobe T."/>
            <person name="Takahashi N."/>
        </authorList>
    </citation>
    <scope>INTERACTION WITH C1QBP</scope>
</reference>
<reference key="11">
    <citation type="journal article" date="2011" name="Sci. Signal.">
        <title>System-wide temporal characterization of the proteome and phosphoproteome of human embryonic stem cell differentiation.</title>
        <authorList>
            <person name="Rigbolt K.T."/>
            <person name="Prokhorova T.A."/>
            <person name="Akimov V."/>
            <person name="Henningsen J."/>
            <person name="Johansen P.T."/>
            <person name="Kratchmarova I."/>
            <person name="Kassem M."/>
            <person name="Mann M."/>
            <person name="Olsen J.V."/>
            <person name="Blagoev B."/>
        </authorList>
    </citation>
    <scope>PHOSPHORYLATION [LARGE SCALE ANALYSIS] AT SER-41</scope>
    <scope>IDENTIFICATION BY MASS SPECTROMETRY [LARGE SCALE ANALYSIS]</scope>
</reference>
<reference key="12">
    <citation type="journal article" date="2013" name="J. Proteome Res.">
        <title>Toward a comprehensive characterization of a human cancer cell phosphoproteome.</title>
        <authorList>
            <person name="Zhou H."/>
            <person name="Di Palma S."/>
            <person name="Preisinger C."/>
            <person name="Peng M."/>
            <person name="Polat A.N."/>
            <person name="Heck A.J."/>
            <person name="Mohammed S."/>
        </authorList>
    </citation>
    <scope>PHOSPHORYLATION [LARGE SCALE ANALYSIS] AT SER-41 AND SER-82</scope>
    <scope>IDENTIFICATION BY MASS SPECTROMETRY [LARGE SCALE ANALYSIS]</scope>
    <source>
        <tissue>Cervix carcinoma</tissue>
        <tissue>Erythroleukemia</tissue>
    </source>
</reference>
<reference key="13">
    <citation type="journal article" date="2017" name="Nat. Struct. Mol. Biol.">
        <title>Site-specific mapping of the human SUMO proteome reveals co-modification with phosphorylation.</title>
        <authorList>
            <person name="Hendriks I.A."/>
            <person name="Lyon D."/>
            <person name="Young C."/>
            <person name="Jensen L.J."/>
            <person name="Vertegaal A.C."/>
            <person name="Nielsen M.L."/>
        </authorList>
    </citation>
    <scope>SUMOYLATION [LARGE SCALE ANALYSIS] AT LYS-125</scope>
    <scope>IDENTIFICATION BY MASS SPECTROMETRY [LARGE SCALE ANALYSIS]</scope>
</reference>
<reference key="14">
    <citation type="journal article" date="2017" name="Arch. Virol.">
        <title>DDX50 inhibits the replication of dengue virus 2 by upregulating IFN-beta production.</title>
        <authorList>
            <person name="Han P."/>
            <person name="Ye W."/>
            <person name="Lv X."/>
            <person name="Ma H."/>
            <person name="Weng D."/>
            <person name="Dong Y."/>
            <person name="Cheng L."/>
            <person name="Chen H."/>
            <person name="Zhang L."/>
            <person name="Xu Z."/>
            <person name="Lei Y."/>
            <person name="Zhang F."/>
        </authorList>
    </citation>
    <scope>FUNCTION</scope>
</reference>
<reference key="15">
    <citation type="journal article" date="2022" name="Viruses">
        <title>DDX50 Is a Viral Restriction Factor That Enhances IRF3 Activation.</title>
        <authorList>
            <person name="Pallett M.A."/>
            <person name="Lu Y."/>
            <person name="Smith G.L."/>
        </authorList>
    </citation>
    <scope>FUNCTION</scope>
    <scope>INTERACTION WITH TICAM1</scope>
    <scope>SUBCELLULAR LOCATION</scope>
</reference>
<reference key="16">
    <citation type="journal article" date="2024" name="Nat. Chem. Biol.">
        <title>A chemical probe to modulate human GID4 Pro/N-degron interactions.</title>
        <authorList>
            <person name="Owens D.D.G."/>
            <person name="Maitland M.E.R."/>
            <person name="Khalili Yazdi A."/>
            <person name="Song X."/>
            <person name="Reber V."/>
            <person name="Schwalm M.P."/>
            <person name="Machado R.A.C."/>
            <person name="Bauer N."/>
            <person name="Wang X."/>
            <person name="Szewczyk M.M."/>
            <person name="Dong C."/>
            <person name="Dong A."/>
            <person name="Loppnau P."/>
            <person name="Calabrese M.F."/>
            <person name="Dowling M.S."/>
            <person name="Lee J."/>
            <person name="Montgomery J.I."/>
            <person name="O'Connell T.N."/>
            <person name="Subramanyam C."/>
            <person name="Wang F."/>
            <person name="Adamson E.C."/>
            <person name="Schapira M."/>
            <person name="Gstaiger M."/>
            <person name="Knapp S."/>
            <person name="Vedadi M."/>
            <person name="Min J."/>
            <person name="Lajoie G.A."/>
            <person name="Barsyte-Lovejoy D."/>
            <person name="Owen D.R."/>
            <person name="Schild-Poulter C."/>
            <person name="Arrowsmith C.H."/>
        </authorList>
    </citation>
    <scope>INTERACTION WITH GID4</scope>
    <scope>SUBCELLULAR LOCATION</scope>
</reference>
<reference key="17">
    <citation type="journal article" date="2009" name="Proteins">
        <title>Solution structure of the GUCT domain from human RNA helicase II/Gu beta reveals the RRM fold, but implausible RNA interactions.</title>
        <authorList>
            <person name="Ohnishi S."/>
            <person name="Paakkonen K."/>
            <person name="Koshiba S."/>
            <person name="Tochio N."/>
            <person name="Sato M."/>
            <person name="Kobayashi N."/>
            <person name="Harada T."/>
            <person name="Watanabe S."/>
            <person name="Muto Y."/>
            <person name="Guntert P."/>
            <person name="Tanaka A."/>
            <person name="Kigawa T."/>
            <person name="Yokoyama S."/>
        </authorList>
    </citation>
    <scope>STRUCTURE BY NMR OF 570-659</scope>
</reference>
<accession>Q9BQ39</accession>
<accession>Q5VX37</accession>
<accession>Q8WV76</accession>
<accession>Q9BWI8</accession>
<keyword id="KW-0002">3D-structure</keyword>
<keyword id="KW-0067">ATP-binding</keyword>
<keyword id="KW-0963">Cytoplasm</keyword>
<keyword id="KW-0347">Helicase</keyword>
<keyword id="KW-0378">Hydrolase</keyword>
<keyword id="KW-1017">Isopeptide bond</keyword>
<keyword id="KW-0547">Nucleotide-binding</keyword>
<keyword id="KW-0539">Nucleus</keyword>
<keyword id="KW-0597">Phosphoprotein</keyword>
<keyword id="KW-1267">Proteomics identification</keyword>
<keyword id="KW-1185">Reference proteome</keyword>
<keyword id="KW-0694">RNA-binding</keyword>
<keyword id="KW-0832">Ubl conjugation</keyword>
<evidence type="ECO:0000250" key="1">
    <source>
        <dbReference type="UniProtKB" id="Q9JIK5"/>
    </source>
</evidence>
<evidence type="ECO:0000250" key="2">
    <source>
        <dbReference type="UniProtKB" id="Q9NR30"/>
    </source>
</evidence>
<evidence type="ECO:0000255" key="3">
    <source>
        <dbReference type="PROSITE-ProRule" id="PRU00541"/>
    </source>
</evidence>
<evidence type="ECO:0000255" key="4">
    <source>
        <dbReference type="PROSITE-ProRule" id="PRU00542"/>
    </source>
</evidence>
<evidence type="ECO:0000256" key="5">
    <source>
        <dbReference type="SAM" id="MobiDB-lite"/>
    </source>
</evidence>
<evidence type="ECO:0000269" key="6">
    <source>
    </source>
</evidence>
<evidence type="ECO:0000269" key="7">
    <source>
    </source>
</evidence>
<evidence type="ECO:0000269" key="8">
    <source>
    </source>
</evidence>
<evidence type="ECO:0000269" key="9">
    <source>
    </source>
</evidence>
<evidence type="ECO:0000269" key="10">
    <source>
    </source>
</evidence>
<evidence type="ECO:0000269" key="11">
    <source>
    </source>
</evidence>
<evidence type="ECO:0000305" key="12"/>
<evidence type="ECO:0007744" key="13">
    <source>
    </source>
</evidence>
<evidence type="ECO:0007744" key="14">
    <source>
    </source>
</evidence>
<evidence type="ECO:0007744" key="15">
    <source>
    </source>
</evidence>
<evidence type="ECO:0007744" key="16">
    <source>
    </source>
</evidence>
<evidence type="ECO:0007744" key="17">
    <source>
    </source>
</evidence>
<evidence type="ECO:0007829" key="18">
    <source>
        <dbReference type="PDB" id="2E29"/>
    </source>
</evidence>